<organism>
    <name type="scientific">Qbeta virus (strain MX1)</name>
    <dbReference type="NCBI Taxonomy" id="2789016"/>
    <lineage>
        <taxon>Viruses</taxon>
        <taxon>Riboviria</taxon>
        <taxon>Orthornavirae</taxon>
        <taxon>Lenarviricota</taxon>
        <taxon>Leviviricetes</taxon>
        <taxon>Norzivirales</taxon>
        <taxon>Fiersviridae</taxon>
        <taxon>Qubevirus</taxon>
        <taxon>Escherichia virus Qbeta</taxon>
    </lineage>
</organism>
<protein>
    <recommendedName>
        <fullName>Maturation protein A2</fullName>
        <shortName>MP</shortName>
    </recommendedName>
    <alternativeName>
        <fullName>A2</fullName>
    </alternativeName>
    <alternativeName>
        <fullName>Assembly protein</fullName>
        <shortName>A protein</shortName>
    </alternativeName>
</protein>
<organismHost>
    <name type="scientific">Escherichia coli</name>
    <dbReference type="NCBI Taxonomy" id="562"/>
</organismHost>
<name>MATA2_BPMX1</name>
<keyword id="KW-0204">Cytolysis</keyword>
<keyword id="KW-0578">Host cell lysis by virus</keyword>
<keyword id="KW-0945">Host-virus interaction</keyword>
<keyword id="KW-1185">Reference proteome</keyword>
<keyword id="KW-0694">RNA-binding</keyword>
<keyword id="KW-1233">Viral attachment to host adhesion receptor</keyword>
<keyword id="KW-1161">Viral attachment to host cell</keyword>
<keyword id="KW-1175">Viral attachment to host cell pilus</keyword>
<keyword id="KW-1188">Viral release from host cell</keyword>
<keyword id="KW-0946">Virion</keyword>
<keyword id="KW-1160">Virus entry into host cell</keyword>
<sequence length="421" mass="48486">MPRLPRALRFGPNMEVLSDFQELWYPESIIDSDVKYPLYTFRGSIGGSFFDSYGTNNIVREIRRTPHCATVPIASSGLRPCTSVWYDPTSLLFRIPEMRAEWDNGMGDAGDIVYKDFLFSTPAPKEFDFSNSLAPRYSNAFSAFNAKYGVIIGEGHETLKYFALLLRRLHKAVRAVRHGDLRGLRKILDSYNKGRWKPATAGNLWLEFRYGLTPLFHDIKSVMDDWNRINDKIQKLRRFSVGHGEDFKLSIDGLYPGLTHFRLSGEITVQRRHRWGITYANREGYATFDNGSIRPVSDWKELANAFINPGEVAWELTPYSFIVDWFINVGDIIEQQKQWYQNIDIVDGYQRRDIRMRSVSLKGVRNGIPVRVTGSVELVDSFYNRSHTTRIPQATLAIDTSFSSIKHVMDSISLITQRIKR</sequence>
<reference key="1">
    <citation type="journal article" date="1995" name="J. Mol. Biol.">
        <title>Secondary structure model for the last two domains of single-stranded RNA phage Q beta.</title>
        <authorList>
            <person name="Beekwilder M.J."/>
            <person name="Nieuwenhuizen R."/>
            <person name="van Duin J."/>
        </authorList>
    </citation>
    <scope>NUCLEOTIDE SEQUENCE [GENOMIC RNA]</scope>
</reference>
<reference key="2">
    <citation type="journal article" date="1996" name="J. Mol. Biol.">
        <title>Secondary structure model for the first three domains of Q beta RNA. Control of A-protein synthesis.</title>
        <authorList>
            <person name="Beekwilder J."/>
            <person name="Nieuwenhuizen R."/>
            <person name="Poot R."/>
            <person name="van Duin J."/>
        </authorList>
    </citation>
    <scope>NUCLEOTIDE SEQUENCE [GENOMIC RNA]</scope>
</reference>
<comment type="function">
    <text evidence="1">Induces host cell lysis. Inhibits host MurA activity thereby blocking the synthesis of murein precursors necessary for the host cell wall biosynthesis. May be responsible for the attachment to the host pilus.</text>
</comment>
<comment type="subunit">
    <text evidence="1">Interacts with host MurA; this interaction inhibits the first step in host cell wall synthesis. Interacts with the capsid protein dimers.</text>
</comment>
<comment type="subcellular location">
    <subcellularLocation>
        <location evidence="1">Virion</location>
    </subcellularLocation>
    <text evidence="1">A single copy of the maturation protein is present in the virion.</text>
</comment>
<comment type="similarity">
    <text evidence="2">Belongs to the Leviviricetes maturation protein family.</text>
</comment>
<evidence type="ECO:0000250" key="1">
    <source>
        <dbReference type="UniProtKB" id="Q8LTE2"/>
    </source>
</evidence>
<evidence type="ECO:0000305" key="2"/>
<feature type="chain" id="PRO_0000402540" description="Maturation protein A2">
    <location>
        <begin position="1"/>
        <end position="421"/>
    </location>
</feature>
<feature type="region of interest" description="RNA-binding" evidence="1">
    <location>
        <begin position="159"/>
        <end position="177"/>
    </location>
</feature>
<feature type="region of interest" description="RNA-binding" evidence="1">
    <location>
        <begin position="227"/>
        <end position="237"/>
    </location>
</feature>
<feature type="region of interest" description="RNA-binding" evidence="1">
    <location>
        <begin position="295"/>
        <end position="299"/>
    </location>
</feature>
<dbReference type="EMBL" id="AF059242">
    <property type="protein sequence ID" value="AAC14698.1"/>
    <property type="molecule type" value="Genomic_RNA"/>
</dbReference>
<dbReference type="SMR" id="O64306"/>
<dbReference type="KEGG" id="vg:1261501"/>
<dbReference type="Proteomes" id="UP000001832">
    <property type="component" value="Genome"/>
</dbReference>
<dbReference type="GO" id="GO:0044423">
    <property type="term" value="C:virion component"/>
    <property type="evidence" value="ECO:0007669"/>
    <property type="project" value="UniProtKB-KW"/>
</dbReference>
<dbReference type="GO" id="GO:0003723">
    <property type="term" value="F:RNA binding"/>
    <property type="evidence" value="ECO:0007669"/>
    <property type="project" value="UniProtKB-KW"/>
</dbReference>
<dbReference type="GO" id="GO:0098671">
    <property type="term" value="P:adhesion receptor-mediated virion attachment to host cell"/>
    <property type="evidence" value="ECO:0007669"/>
    <property type="project" value="UniProtKB-KW"/>
</dbReference>
<dbReference type="GO" id="GO:0031640">
    <property type="term" value="P:killing of cells of another organism"/>
    <property type="evidence" value="ECO:0007669"/>
    <property type="project" value="UniProtKB-KW"/>
</dbReference>
<dbReference type="GO" id="GO:0039666">
    <property type="term" value="P:virion attachment to host cell pilus"/>
    <property type="evidence" value="ECO:0007669"/>
    <property type="project" value="UniProtKB-KW"/>
</dbReference>
<dbReference type="InterPro" id="IPR005563">
    <property type="entry name" value="A_protein"/>
</dbReference>
<dbReference type="Pfam" id="PF03863">
    <property type="entry name" value="Phage_mat-A"/>
    <property type="match status" value="1"/>
</dbReference>
<proteinExistence type="inferred from homology"/>
<accession>O64306</accession>
<gene>
    <name type="primary">A</name>
</gene>